<feature type="signal peptide" evidence="2">
    <location>
        <begin position="1"/>
        <end position="20"/>
    </location>
</feature>
<feature type="propeptide" id="PRO_0000412380" evidence="1">
    <location>
        <begin position="21"/>
        <end position="87"/>
    </location>
</feature>
<feature type="chain" id="PRO_0000412381" description="Leucine aminopeptidase 1">
    <location>
        <begin position="88"/>
        <end position="385"/>
    </location>
</feature>
<feature type="binding site" evidence="1">
    <location>
        <position position="185"/>
    </location>
    <ligand>
        <name>Zn(2+)</name>
        <dbReference type="ChEBI" id="CHEBI:29105"/>
        <label>1</label>
    </ligand>
</feature>
<feature type="binding site" evidence="1">
    <location>
        <position position="204"/>
    </location>
    <ligand>
        <name>Zn(2+)</name>
        <dbReference type="ChEBI" id="CHEBI:29105"/>
        <label>1</label>
    </ligand>
</feature>
<feature type="binding site" evidence="1">
    <location>
        <position position="204"/>
    </location>
    <ligand>
        <name>Zn(2+)</name>
        <dbReference type="ChEBI" id="CHEBI:29105"/>
        <label>2</label>
        <note>catalytic</note>
    </ligand>
</feature>
<feature type="binding site" evidence="1">
    <location>
        <position position="243"/>
    </location>
    <ligand>
        <name>Zn(2+)</name>
        <dbReference type="ChEBI" id="CHEBI:29105"/>
        <label>2</label>
        <note>catalytic</note>
    </ligand>
</feature>
<feature type="binding site" evidence="1">
    <location>
        <position position="270"/>
    </location>
    <ligand>
        <name>Zn(2+)</name>
        <dbReference type="ChEBI" id="CHEBI:29105"/>
        <label>1</label>
    </ligand>
</feature>
<feature type="binding site" evidence="1">
    <location>
        <position position="352"/>
    </location>
    <ligand>
        <name>Zn(2+)</name>
        <dbReference type="ChEBI" id="CHEBI:29105"/>
        <label>2</label>
        <note>catalytic</note>
    </ligand>
</feature>
<feature type="glycosylation site" description="N-linked (GlcNAc...) asparagine" evidence="2">
    <location>
        <position position="177"/>
    </location>
</feature>
<feature type="disulfide bond" evidence="1">
    <location>
        <begin position="319"/>
        <end position="323"/>
    </location>
</feature>
<comment type="function">
    <text evidence="1">Extracellular aminopeptidase that allows assimilation of proteinaceous substrates.</text>
</comment>
<comment type="cofactor">
    <cofactor evidence="1">
        <name>Zn(2+)</name>
        <dbReference type="ChEBI" id="CHEBI:29105"/>
    </cofactor>
    <text evidence="1">Binds 2 Zn(2+) ions per subunit.</text>
</comment>
<comment type="subunit">
    <text evidence="1">Monomer.</text>
</comment>
<comment type="subcellular location">
    <subcellularLocation>
        <location evidence="1">Secreted</location>
    </subcellularLocation>
</comment>
<comment type="similarity">
    <text evidence="3">Belongs to the peptidase M28 family. M28E subfamily.</text>
</comment>
<proteinExistence type="inferred from homology"/>
<accession>A6REE0</accession>
<evidence type="ECO:0000250" key="1"/>
<evidence type="ECO:0000255" key="2"/>
<evidence type="ECO:0000305" key="3"/>
<sequence>MKLPSLLSLGVAASTTIVAAVPDQKPIGDTIEDVHLGKFLIELGPGDTRWVTEEEKWGLRRDGRRFFDITAEAEQNVFPKTFAQTTVTFPSELQNVAHVKKLASSLSKNRLQTFLTKFTSFHTRYYKSESGRQSAIWLFEQIEKIIQESSATGARVEKFEHPWGQFSIIATIPGQTNKTVVVGAHQDSINLLMPSILPAPGADDDGSGTATILEALRILLKSEAVAQGKAPNTVEFHWYSAEEAGLLGSQAVFAQYKQDNRDVKSMLQQDMTGYSKGTMNAGHVDSVGIITDFVDEGLTNFITKVVTGYCGISYVLTKCGYACSDHASASRYGYPSAFVIESKFEYSSKLIHTTRDEVSSLDFDHMLQHAKMTLGLVYELAFADL</sequence>
<reference key="1">
    <citation type="journal article" date="2009" name="Genome Res.">
        <title>Comparative genomic analyses of the human fungal pathogens Coccidioides and their relatives.</title>
        <authorList>
            <person name="Sharpton T.J."/>
            <person name="Stajich J.E."/>
            <person name="Rounsley S.D."/>
            <person name="Gardner M.J."/>
            <person name="Wortman J.R."/>
            <person name="Jordar V.S."/>
            <person name="Maiti R."/>
            <person name="Kodira C.D."/>
            <person name="Neafsey D.E."/>
            <person name="Zeng Q."/>
            <person name="Hung C.-Y."/>
            <person name="McMahan C."/>
            <person name="Muszewska A."/>
            <person name="Grynberg M."/>
            <person name="Mandel M.A."/>
            <person name="Kellner E.M."/>
            <person name="Barker B.M."/>
            <person name="Galgiani J.N."/>
            <person name="Orbach M.J."/>
            <person name="Kirkland T.N."/>
            <person name="Cole G.T."/>
            <person name="Henn M.R."/>
            <person name="Birren B.W."/>
            <person name="Taylor J.W."/>
        </authorList>
    </citation>
    <scope>NUCLEOTIDE SEQUENCE [LARGE SCALE GENOMIC DNA]</scope>
    <source>
        <strain>NAm1 / WU24</strain>
    </source>
</reference>
<name>LAP1_AJECN</name>
<gene>
    <name type="primary">LAP1</name>
    <name type="ORF">HCAG_08005</name>
</gene>
<protein>
    <recommendedName>
        <fullName>Leucine aminopeptidase 1</fullName>
        <ecNumber>3.4.11.-</ecNumber>
    </recommendedName>
    <alternativeName>
        <fullName>Leucyl aminopeptidase 1</fullName>
        <shortName>LAP1</shortName>
    </alternativeName>
</protein>
<organism>
    <name type="scientific">Ajellomyces capsulatus (strain NAm1 / WU24)</name>
    <name type="common">Darling's disease fungus</name>
    <name type="synonym">Histoplasma capsulatum</name>
    <dbReference type="NCBI Taxonomy" id="2059318"/>
    <lineage>
        <taxon>Eukaryota</taxon>
        <taxon>Fungi</taxon>
        <taxon>Dikarya</taxon>
        <taxon>Ascomycota</taxon>
        <taxon>Pezizomycotina</taxon>
        <taxon>Eurotiomycetes</taxon>
        <taxon>Eurotiomycetidae</taxon>
        <taxon>Onygenales</taxon>
        <taxon>Ajellomycetaceae</taxon>
        <taxon>Histoplasma</taxon>
    </lineage>
</organism>
<dbReference type="EC" id="3.4.11.-"/>
<dbReference type="EMBL" id="CH476664">
    <property type="protein sequence ID" value="EDN04339.1"/>
    <property type="molecule type" value="Genomic_DNA"/>
</dbReference>
<dbReference type="SMR" id="A6REE0"/>
<dbReference type="STRING" id="339724.A6REE0"/>
<dbReference type="MEROPS" id="M28.022"/>
<dbReference type="GlyCosmos" id="A6REE0">
    <property type="glycosylation" value="1 site, No reported glycans"/>
</dbReference>
<dbReference type="KEGG" id="aje:HCAG_08005"/>
<dbReference type="VEuPathDB" id="FungiDB:HCAG_08005"/>
<dbReference type="HOGENOM" id="CLU_025866_0_0_1"/>
<dbReference type="OMA" id="GMLQQDM"/>
<dbReference type="OrthoDB" id="4027at299071"/>
<dbReference type="Proteomes" id="UP000009297">
    <property type="component" value="Unassembled WGS sequence"/>
</dbReference>
<dbReference type="GO" id="GO:0005576">
    <property type="term" value="C:extracellular region"/>
    <property type="evidence" value="ECO:0007669"/>
    <property type="project" value="UniProtKB-SubCell"/>
</dbReference>
<dbReference type="GO" id="GO:0004177">
    <property type="term" value="F:aminopeptidase activity"/>
    <property type="evidence" value="ECO:0007669"/>
    <property type="project" value="UniProtKB-KW"/>
</dbReference>
<dbReference type="GO" id="GO:0046872">
    <property type="term" value="F:metal ion binding"/>
    <property type="evidence" value="ECO:0007669"/>
    <property type="project" value="UniProtKB-KW"/>
</dbReference>
<dbReference type="GO" id="GO:0008235">
    <property type="term" value="F:metalloexopeptidase activity"/>
    <property type="evidence" value="ECO:0007669"/>
    <property type="project" value="InterPro"/>
</dbReference>
<dbReference type="GO" id="GO:0006508">
    <property type="term" value="P:proteolysis"/>
    <property type="evidence" value="ECO:0007669"/>
    <property type="project" value="UniProtKB-KW"/>
</dbReference>
<dbReference type="CDD" id="cd03879">
    <property type="entry name" value="M28_AAP"/>
    <property type="match status" value="1"/>
</dbReference>
<dbReference type="FunFam" id="3.40.630.10:FF:000042">
    <property type="entry name" value="Peptide hydrolase"/>
    <property type="match status" value="1"/>
</dbReference>
<dbReference type="Gene3D" id="3.40.630.10">
    <property type="entry name" value="Zn peptidases"/>
    <property type="match status" value="1"/>
</dbReference>
<dbReference type="InterPro" id="IPR045175">
    <property type="entry name" value="M28_fam"/>
</dbReference>
<dbReference type="InterPro" id="IPR007484">
    <property type="entry name" value="Peptidase_M28"/>
</dbReference>
<dbReference type="PANTHER" id="PTHR12147:SF56">
    <property type="entry name" value="AMINOPEPTIDASE YDR415C-RELATED"/>
    <property type="match status" value="1"/>
</dbReference>
<dbReference type="PANTHER" id="PTHR12147">
    <property type="entry name" value="METALLOPEPTIDASE M28 FAMILY MEMBER"/>
    <property type="match status" value="1"/>
</dbReference>
<dbReference type="Pfam" id="PF04389">
    <property type="entry name" value="Peptidase_M28"/>
    <property type="match status" value="1"/>
</dbReference>
<dbReference type="SUPFAM" id="SSF53187">
    <property type="entry name" value="Zn-dependent exopeptidases"/>
    <property type="match status" value="1"/>
</dbReference>
<keyword id="KW-0031">Aminopeptidase</keyword>
<keyword id="KW-1015">Disulfide bond</keyword>
<keyword id="KW-0325">Glycoprotein</keyword>
<keyword id="KW-0378">Hydrolase</keyword>
<keyword id="KW-0479">Metal-binding</keyword>
<keyword id="KW-0645">Protease</keyword>
<keyword id="KW-1185">Reference proteome</keyword>
<keyword id="KW-0964">Secreted</keyword>
<keyword id="KW-0732">Signal</keyword>
<keyword id="KW-0862">Zinc</keyword>
<keyword id="KW-0865">Zymogen</keyword>